<reference key="1">
    <citation type="journal article" date="2002" name="Eukaryot. Cell">
        <title>Evolutionary analyses of ABC transporters of Dictyostelium discoideum.</title>
        <authorList>
            <person name="Anjard C."/>
            <person name="Loomis W.F."/>
        </authorList>
    </citation>
    <scope>NUCLEOTIDE SEQUENCE [GENOMIC DNA]</scope>
    <scope>NOMENCLATURE</scope>
    <source>
        <strain>AX4</strain>
    </source>
</reference>
<reference key="2">
    <citation type="journal article" date="2005" name="Nature">
        <title>The genome of the social amoeba Dictyostelium discoideum.</title>
        <authorList>
            <person name="Eichinger L."/>
            <person name="Pachebat J.A."/>
            <person name="Gloeckner G."/>
            <person name="Rajandream M.A."/>
            <person name="Sucgang R."/>
            <person name="Berriman M."/>
            <person name="Song J."/>
            <person name="Olsen R."/>
            <person name="Szafranski K."/>
            <person name="Xu Q."/>
            <person name="Tunggal B."/>
            <person name="Kummerfeld S."/>
            <person name="Madera M."/>
            <person name="Konfortov B.A."/>
            <person name="Rivero F."/>
            <person name="Bankier A.T."/>
            <person name="Lehmann R."/>
            <person name="Hamlin N."/>
            <person name="Davies R."/>
            <person name="Gaudet P."/>
            <person name="Fey P."/>
            <person name="Pilcher K."/>
            <person name="Chen G."/>
            <person name="Saunders D."/>
            <person name="Sodergren E.J."/>
            <person name="Davis P."/>
            <person name="Kerhornou A."/>
            <person name="Nie X."/>
            <person name="Hall N."/>
            <person name="Anjard C."/>
            <person name="Hemphill L."/>
            <person name="Bason N."/>
            <person name="Farbrother P."/>
            <person name="Desany B."/>
            <person name="Just E."/>
            <person name="Morio T."/>
            <person name="Rost R."/>
            <person name="Churcher C.M."/>
            <person name="Cooper J."/>
            <person name="Haydock S."/>
            <person name="van Driessche N."/>
            <person name="Cronin A."/>
            <person name="Goodhead I."/>
            <person name="Muzny D.M."/>
            <person name="Mourier T."/>
            <person name="Pain A."/>
            <person name="Lu M."/>
            <person name="Harper D."/>
            <person name="Lindsay R."/>
            <person name="Hauser H."/>
            <person name="James K.D."/>
            <person name="Quiles M."/>
            <person name="Madan Babu M."/>
            <person name="Saito T."/>
            <person name="Buchrieser C."/>
            <person name="Wardroper A."/>
            <person name="Felder M."/>
            <person name="Thangavelu M."/>
            <person name="Johnson D."/>
            <person name="Knights A."/>
            <person name="Loulseged H."/>
            <person name="Mungall K.L."/>
            <person name="Oliver K."/>
            <person name="Price C."/>
            <person name="Quail M.A."/>
            <person name="Urushihara H."/>
            <person name="Hernandez J."/>
            <person name="Rabbinowitsch E."/>
            <person name="Steffen D."/>
            <person name="Sanders M."/>
            <person name="Ma J."/>
            <person name="Kohara Y."/>
            <person name="Sharp S."/>
            <person name="Simmonds M.N."/>
            <person name="Spiegler S."/>
            <person name="Tivey A."/>
            <person name="Sugano S."/>
            <person name="White B."/>
            <person name="Walker D."/>
            <person name="Woodward J.R."/>
            <person name="Winckler T."/>
            <person name="Tanaka Y."/>
            <person name="Shaulsky G."/>
            <person name="Schleicher M."/>
            <person name="Weinstock G.M."/>
            <person name="Rosenthal A."/>
            <person name="Cox E.C."/>
            <person name="Chisholm R.L."/>
            <person name="Gibbs R.A."/>
            <person name="Loomis W.F."/>
            <person name="Platzer M."/>
            <person name="Kay R.R."/>
            <person name="Williams J.G."/>
            <person name="Dear P.H."/>
            <person name="Noegel A.A."/>
            <person name="Barrell B.G."/>
            <person name="Kuspa A."/>
        </authorList>
    </citation>
    <scope>NUCLEOTIDE SEQUENCE [LARGE SCALE GENOMIC DNA]</scope>
    <source>
        <strain>AX4</strain>
    </source>
</reference>
<sequence length="697" mass="78531">MYSINRIGIHGISNKILSRPKFFHSSSSIFSLNQNLNNFKNNNNYILNGYNKITHNHHHQTLFHRHYSNLKQEQENKQQNVGKNSETSPSSTTTTENITTATTATTKTDIKETQNSTMSMLKTVFKYLWPKDNNDSKIRIITSVLLLLSAKVLTVQIPFIFKDIVDSLTTTQSEMLTLPLGLLLAYGAVKITSNGFQELRQTIFSKVAHDAIRDVSCSTFKRLHQLDLTFHLSRQTGSLSRIIDRGGRGINFLLNSILFHVVPTAFEISLVSYVMYTTLGWEYSALSLATIAAYTVFTVKVTKWRTQFRVKMNKMDNEASNKMMDSLINFETVKYFNNDALEVERYHNYLKEYDKASLKTTSSLSFLNFGQALIFSLSMTAMMIMAAQGVVQGNLSVGDLVLVNGLLFQISLPLNFLGTVYREIKQSLVDMDHLFSLLNLNPKISDNKDSKPLKLENGTIVFRDISFKYNDSVQVLNNVSFECEGGKRIAIVGSSGSGKSTLLRLLYRFYDVSSGSIEIDGQDIRGIQLESLRKHIGVVPQDTVLFNDTIYYNIAYGNPNATKEQVENAARAAHIHEVILNMKNGYDTVVGERGLKLSGGEKQRVSIARAILKDSPIVFYDEATSSLDTEKEKLIMDALRELFKGRTTIMIAHRLSTIVDADEIIVLGTGGIILERGNHQQLLELEGKYRSMWLAQQ</sequence>
<name>ABCB5_DICDI</name>
<proteinExistence type="inferred from homology"/>
<keyword id="KW-0067">ATP-binding</keyword>
<keyword id="KW-0472">Membrane</keyword>
<keyword id="KW-0547">Nucleotide-binding</keyword>
<keyword id="KW-1185">Reference proteome</keyword>
<keyword id="KW-0812">Transmembrane</keyword>
<keyword id="KW-1133">Transmembrane helix</keyword>
<keyword id="KW-0813">Transport</keyword>
<evidence type="ECO:0000255" key="1">
    <source>
        <dbReference type="PROSITE-ProRule" id="PRU00434"/>
    </source>
</evidence>
<evidence type="ECO:0000255" key="2">
    <source>
        <dbReference type="PROSITE-ProRule" id="PRU00441"/>
    </source>
</evidence>
<evidence type="ECO:0000256" key="3">
    <source>
        <dbReference type="SAM" id="MobiDB-lite"/>
    </source>
</evidence>
<evidence type="ECO:0000305" key="4"/>
<accession>Q8T9W2</accession>
<accession>Q54D24</accession>
<comment type="subcellular location">
    <subcellularLocation>
        <location evidence="2">Membrane</location>
        <topology evidence="2">Multi-pass membrane protein</topology>
    </subcellularLocation>
</comment>
<comment type="similarity">
    <text evidence="4">Belongs to the ABC transporter superfamily. ABCB family. Metal importer (TC 3.A.1.210) subfamily.</text>
</comment>
<feature type="chain" id="PRO_0000391326" description="ABC transporter B family member 5">
    <location>
        <begin position="1"/>
        <end position="697"/>
    </location>
</feature>
<feature type="transmembrane region" description="Helical" evidence="2">
    <location>
        <begin position="140"/>
        <end position="160"/>
    </location>
</feature>
<feature type="transmembrane region" description="Helical" evidence="2">
    <location>
        <begin position="176"/>
        <end position="196"/>
    </location>
</feature>
<feature type="transmembrane region" description="Helical" evidence="2">
    <location>
        <begin position="252"/>
        <end position="272"/>
    </location>
</feature>
<feature type="transmembrane region" description="Helical" evidence="2">
    <location>
        <begin position="279"/>
        <end position="299"/>
    </location>
</feature>
<feature type="transmembrane region" description="Helical" evidence="2">
    <location>
        <begin position="366"/>
        <end position="386"/>
    </location>
</feature>
<feature type="transmembrane region" description="Helical" evidence="2">
    <location>
        <begin position="400"/>
        <end position="420"/>
    </location>
</feature>
<feature type="domain" description="ABC transmembrane type-1" evidence="2">
    <location>
        <begin position="140"/>
        <end position="426"/>
    </location>
</feature>
<feature type="domain" description="ABC transporter" evidence="1">
    <location>
        <begin position="460"/>
        <end position="695"/>
    </location>
</feature>
<feature type="region of interest" description="Disordered" evidence="3">
    <location>
        <begin position="73"/>
        <end position="111"/>
    </location>
</feature>
<feature type="compositionally biased region" description="Low complexity" evidence="3">
    <location>
        <begin position="77"/>
        <end position="107"/>
    </location>
</feature>
<feature type="binding site" evidence="1">
    <location>
        <begin position="493"/>
        <end position="500"/>
    </location>
    <ligand>
        <name>ATP</name>
        <dbReference type="ChEBI" id="CHEBI:30616"/>
    </ligand>
</feature>
<gene>
    <name type="primary">abcB5</name>
    <name type="ORF">DDB_G0292554</name>
</gene>
<protein>
    <recommendedName>
        <fullName>ABC transporter B family member 5</fullName>
    </recommendedName>
    <alternativeName>
        <fullName>ABC transporter ABCB.5</fullName>
    </alternativeName>
</protein>
<dbReference type="EMBL" id="AF466308">
    <property type="protein sequence ID" value="AAL74252.1"/>
    <property type="molecule type" value="Genomic_DNA"/>
</dbReference>
<dbReference type="EMBL" id="AAFI02000194">
    <property type="protein sequence ID" value="EAL61080.1"/>
    <property type="molecule type" value="Genomic_DNA"/>
</dbReference>
<dbReference type="RefSeq" id="XP_629496.1">
    <property type="nucleotide sequence ID" value="XM_629494.1"/>
</dbReference>
<dbReference type="SMR" id="Q8T9W2"/>
<dbReference type="FunCoup" id="Q8T9W2">
    <property type="interactions" value="741"/>
</dbReference>
<dbReference type="STRING" id="44689.Q8T9W2"/>
<dbReference type="PaxDb" id="44689-DDB0201625"/>
<dbReference type="EnsemblProtists" id="EAL61080">
    <property type="protein sequence ID" value="EAL61080"/>
    <property type="gene ID" value="DDB_G0292554"/>
</dbReference>
<dbReference type="GeneID" id="8628745"/>
<dbReference type="KEGG" id="ddi:DDB_G0292554"/>
<dbReference type="dictyBase" id="DDB_G0292554">
    <property type="gene designation" value="abcB5"/>
</dbReference>
<dbReference type="VEuPathDB" id="AmoebaDB:DDB_G0292554"/>
<dbReference type="eggNOG" id="KOG0057">
    <property type="taxonomic scope" value="Eukaryota"/>
</dbReference>
<dbReference type="HOGENOM" id="CLU_000604_84_1_1"/>
<dbReference type="InParanoid" id="Q8T9W2"/>
<dbReference type="OMA" id="VFHIIPI"/>
<dbReference type="PhylomeDB" id="Q8T9W2"/>
<dbReference type="Reactome" id="R-DDI-1369007">
    <property type="pathway name" value="Mitochondrial ABC transporters"/>
</dbReference>
<dbReference type="PRO" id="PR:Q8T9W2"/>
<dbReference type="Proteomes" id="UP000002195">
    <property type="component" value="Chromosome 6"/>
</dbReference>
<dbReference type="GO" id="GO:0043190">
    <property type="term" value="C:ATP-binding cassette (ABC) transporter complex"/>
    <property type="evidence" value="ECO:0000317"/>
    <property type="project" value="dictyBase"/>
</dbReference>
<dbReference type="GO" id="GO:0005743">
    <property type="term" value="C:mitochondrial inner membrane"/>
    <property type="evidence" value="ECO:0000318"/>
    <property type="project" value="GO_Central"/>
</dbReference>
<dbReference type="GO" id="GO:0005739">
    <property type="term" value="C:mitochondrion"/>
    <property type="evidence" value="ECO:0000317"/>
    <property type="project" value="dictyBase"/>
</dbReference>
<dbReference type="GO" id="GO:0140359">
    <property type="term" value="F:ABC-type transporter activity"/>
    <property type="evidence" value="ECO:0007669"/>
    <property type="project" value="InterPro"/>
</dbReference>
<dbReference type="GO" id="GO:0005524">
    <property type="term" value="F:ATP binding"/>
    <property type="evidence" value="ECO:0007669"/>
    <property type="project" value="UniProtKB-KW"/>
</dbReference>
<dbReference type="GO" id="GO:0016887">
    <property type="term" value="F:ATP hydrolysis activity"/>
    <property type="evidence" value="ECO:0007669"/>
    <property type="project" value="InterPro"/>
</dbReference>
<dbReference type="GO" id="GO:0042626">
    <property type="term" value="F:ATPase-coupled transmembrane transporter activity"/>
    <property type="evidence" value="ECO:0000318"/>
    <property type="project" value="GO_Central"/>
</dbReference>
<dbReference type="GO" id="GO:0031154">
    <property type="term" value="P:culmination involved in sorocarp development"/>
    <property type="evidence" value="ECO:0000315"/>
    <property type="project" value="dictyBase"/>
</dbReference>
<dbReference type="GO" id="GO:0006879">
    <property type="term" value="P:intracellular iron ion homeostasis"/>
    <property type="evidence" value="ECO:0000318"/>
    <property type="project" value="GO_Central"/>
</dbReference>
<dbReference type="GO" id="GO:0055085">
    <property type="term" value="P:transmembrane transport"/>
    <property type="evidence" value="ECO:0000318"/>
    <property type="project" value="GO_Central"/>
</dbReference>
<dbReference type="CDD" id="cd18582">
    <property type="entry name" value="ABC_6TM_ATM1_ABCB7"/>
    <property type="match status" value="1"/>
</dbReference>
<dbReference type="CDD" id="cd03253">
    <property type="entry name" value="ABCC_ATM1_transporter"/>
    <property type="match status" value="1"/>
</dbReference>
<dbReference type="FunFam" id="1.20.1560.10:FF:000004">
    <property type="entry name" value="ATP-binding cassette sub-family B member 7"/>
    <property type="match status" value="1"/>
</dbReference>
<dbReference type="FunFam" id="3.40.50.300:FF:000186">
    <property type="entry name" value="ATP-binding cassette sub-family B member 7, mitochondrial"/>
    <property type="match status" value="1"/>
</dbReference>
<dbReference type="Gene3D" id="1.20.1560.10">
    <property type="entry name" value="ABC transporter type 1, transmembrane domain"/>
    <property type="match status" value="1"/>
</dbReference>
<dbReference type="Gene3D" id="3.40.50.300">
    <property type="entry name" value="P-loop containing nucleotide triphosphate hydrolases"/>
    <property type="match status" value="1"/>
</dbReference>
<dbReference type="InterPro" id="IPR003593">
    <property type="entry name" value="AAA+_ATPase"/>
</dbReference>
<dbReference type="InterPro" id="IPR011527">
    <property type="entry name" value="ABC1_TM_dom"/>
</dbReference>
<dbReference type="InterPro" id="IPR036640">
    <property type="entry name" value="ABC1_TM_sf"/>
</dbReference>
<dbReference type="InterPro" id="IPR003439">
    <property type="entry name" value="ABC_transporter-like_ATP-bd"/>
</dbReference>
<dbReference type="InterPro" id="IPR017871">
    <property type="entry name" value="ABC_transporter-like_CS"/>
</dbReference>
<dbReference type="InterPro" id="IPR027417">
    <property type="entry name" value="P-loop_NTPase"/>
</dbReference>
<dbReference type="InterPro" id="IPR039421">
    <property type="entry name" value="Type_1_exporter"/>
</dbReference>
<dbReference type="PANTHER" id="PTHR24221">
    <property type="entry name" value="ATP-BINDING CASSETTE SUB-FAMILY B"/>
    <property type="match status" value="1"/>
</dbReference>
<dbReference type="PANTHER" id="PTHR24221:SF402">
    <property type="entry name" value="IRON-SULFUR CLUSTERS TRANSPORTER ABCB7, MITOCHONDRIAL"/>
    <property type="match status" value="1"/>
</dbReference>
<dbReference type="Pfam" id="PF00664">
    <property type="entry name" value="ABC_membrane"/>
    <property type="match status" value="1"/>
</dbReference>
<dbReference type="Pfam" id="PF00005">
    <property type="entry name" value="ABC_tran"/>
    <property type="match status" value="1"/>
</dbReference>
<dbReference type="SMART" id="SM00382">
    <property type="entry name" value="AAA"/>
    <property type="match status" value="1"/>
</dbReference>
<dbReference type="SUPFAM" id="SSF90123">
    <property type="entry name" value="ABC transporter transmembrane region"/>
    <property type="match status" value="1"/>
</dbReference>
<dbReference type="SUPFAM" id="SSF52540">
    <property type="entry name" value="P-loop containing nucleoside triphosphate hydrolases"/>
    <property type="match status" value="1"/>
</dbReference>
<dbReference type="PROSITE" id="PS50929">
    <property type="entry name" value="ABC_TM1F"/>
    <property type="match status" value="1"/>
</dbReference>
<dbReference type="PROSITE" id="PS00211">
    <property type="entry name" value="ABC_TRANSPORTER_1"/>
    <property type="match status" value="1"/>
</dbReference>
<dbReference type="PROSITE" id="PS50893">
    <property type="entry name" value="ABC_TRANSPORTER_2"/>
    <property type="match status" value="1"/>
</dbReference>
<organism>
    <name type="scientific">Dictyostelium discoideum</name>
    <name type="common">Social amoeba</name>
    <dbReference type="NCBI Taxonomy" id="44689"/>
    <lineage>
        <taxon>Eukaryota</taxon>
        <taxon>Amoebozoa</taxon>
        <taxon>Evosea</taxon>
        <taxon>Eumycetozoa</taxon>
        <taxon>Dictyostelia</taxon>
        <taxon>Dictyosteliales</taxon>
        <taxon>Dictyosteliaceae</taxon>
        <taxon>Dictyostelium</taxon>
    </lineage>
</organism>